<keyword id="KW-0963">Cytoplasm</keyword>
<keyword id="KW-0489">Methyltransferase</keyword>
<keyword id="KW-1185">Reference proteome</keyword>
<keyword id="KW-0698">rRNA processing</keyword>
<keyword id="KW-0949">S-adenosyl-L-methionine</keyword>
<keyword id="KW-0808">Transferase</keyword>
<comment type="function">
    <text evidence="1">Specifically methylates the guanine in position 1207 of 16S rRNA in the 30S particle.</text>
</comment>
<comment type="catalytic activity">
    <reaction evidence="1">
        <text>guanosine(1207) in 16S rRNA + S-adenosyl-L-methionine = N(2)-methylguanosine(1207) in 16S rRNA + S-adenosyl-L-homocysteine + H(+)</text>
        <dbReference type="Rhea" id="RHEA:42736"/>
        <dbReference type="Rhea" id="RHEA-COMP:10213"/>
        <dbReference type="Rhea" id="RHEA-COMP:10214"/>
        <dbReference type="ChEBI" id="CHEBI:15378"/>
        <dbReference type="ChEBI" id="CHEBI:57856"/>
        <dbReference type="ChEBI" id="CHEBI:59789"/>
        <dbReference type="ChEBI" id="CHEBI:74269"/>
        <dbReference type="ChEBI" id="CHEBI:74481"/>
        <dbReference type="EC" id="2.1.1.172"/>
    </reaction>
</comment>
<comment type="subunit">
    <text evidence="1">Monomer.</text>
</comment>
<comment type="subcellular location">
    <subcellularLocation>
        <location evidence="1">Cytoplasm</location>
    </subcellularLocation>
</comment>
<comment type="similarity">
    <text evidence="1">Belongs to the methyltransferase superfamily. RsmC family.</text>
</comment>
<sequence length="342" mass="37686">MSAFTPASEVLLRHSDDFEQSRILFAGDLQDDLPARFESAASRVHTQQFHHWQLLSQLMGEKARFSLVAHADDVADCDTLIYYWPKNKPEAQFQLMNILSLLPLGTDIFVVGENRSGVRSAEQMLADYAPLNKIDSARRCGLYHGRLEKQPVFDAEKYWGEYRINDLTIKTLPGVFSRDGLDVGSQLLLSTLTPHTKGKVLDVGCGAGVLSAALASHSPKVRLTLCDVSAPAVEASRATLAANGVEGEVFASNVFSDVKGRFDMIISNPPFHDGIQTSLDAAQTLIHGAVRHLNSGGELRIVANAFLPYPKVLDETFGFHEVIAQTGRFKVYRTVMTRQAKK</sequence>
<accession>A8ALZ1</accession>
<evidence type="ECO:0000255" key="1">
    <source>
        <dbReference type="HAMAP-Rule" id="MF_01862"/>
    </source>
</evidence>
<name>RSMC_CITK8</name>
<dbReference type="EC" id="2.1.1.172" evidence="1"/>
<dbReference type="EMBL" id="CP000822">
    <property type="protein sequence ID" value="ABV14503.1"/>
    <property type="molecule type" value="Genomic_DNA"/>
</dbReference>
<dbReference type="RefSeq" id="WP_012134205.1">
    <property type="nucleotide sequence ID" value="NC_009792.1"/>
</dbReference>
<dbReference type="SMR" id="A8ALZ1"/>
<dbReference type="STRING" id="290338.CKO_03420"/>
<dbReference type="GeneID" id="45137176"/>
<dbReference type="KEGG" id="cko:CKO_03420"/>
<dbReference type="HOGENOM" id="CLU_049581_0_1_6"/>
<dbReference type="OrthoDB" id="9816072at2"/>
<dbReference type="Proteomes" id="UP000008148">
    <property type="component" value="Chromosome"/>
</dbReference>
<dbReference type="GO" id="GO:0005737">
    <property type="term" value="C:cytoplasm"/>
    <property type="evidence" value="ECO:0007669"/>
    <property type="project" value="UniProtKB-SubCell"/>
</dbReference>
<dbReference type="GO" id="GO:0052914">
    <property type="term" value="F:16S rRNA (guanine(1207)-N(2))-methyltransferase activity"/>
    <property type="evidence" value="ECO:0007669"/>
    <property type="project" value="UniProtKB-EC"/>
</dbReference>
<dbReference type="GO" id="GO:0003676">
    <property type="term" value="F:nucleic acid binding"/>
    <property type="evidence" value="ECO:0007669"/>
    <property type="project" value="InterPro"/>
</dbReference>
<dbReference type="CDD" id="cd02440">
    <property type="entry name" value="AdoMet_MTases"/>
    <property type="match status" value="1"/>
</dbReference>
<dbReference type="Gene3D" id="3.40.50.150">
    <property type="entry name" value="Vaccinia Virus protein VP39"/>
    <property type="match status" value="2"/>
</dbReference>
<dbReference type="HAMAP" id="MF_01862">
    <property type="entry name" value="16SrRNA_methyltr_C"/>
    <property type="match status" value="1"/>
</dbReference>
<dbReference type="InterPro" id="IPR002052">
    <property type="entry name" value="DNA_methylase_N6_adenine_CS"/>
</dbReference>
<dbReference type="InterPro" id="IPR013675">
    <property type="entry name" value="Mtase_sm_N"/>
</dbReference>
<dbReference type="InterPro" id="IPR023543">
    <property type="entry name" value="rRNA_ssu_MeTfrase_C"/>
</dbReference>
<dbReference type="InterPro" id="IPR046977">
    <property type="entry name" value="RsmC/RlmG"/>
</dbReference>
<dbReference type="InterPro" id="IPR029063">
    <property type="entry name" value="SAM-dependent_MTases_sf"/>
</dbReference>
<dbReference type="InterPro" id="IPR007848">
    <property type="entry name" value="Small_mtfrase_dom"/>
</dbReference>
<dbReference type="NCBIfam" id="NF007023">
    <property type="entry name" value="PRK09489.1"/>
    <property type="match status" value="1"/>
</dbReference>
<dbReference type="PANTHER" id="PTHR47816">
    <property type="entry name" value="RIBOSOMAL RNA SMALL SUBUNIT METHYLTRANSFERASE C"/>
    <property type="match status" value="1"/>
</dbReference>
<dbReference type="PANTHER" id="PTHR47816:SF4">
    <property type="entry name" value="RIBOSOMAL RNA SMALL SUBUNIT METHYLTRANSFERASE C"/>
    <property type="match status" value="1"/>
</dbReference>
<dbReference type="Pfam" id="PF05175">
    <property type="entry name" value="MTS"/>
    <property type="match status" value="1"/>
</dbReference>
<dbReference type="Pfam" id="PF08468">
    <property type="entry name" value="MTS_N"/>
    <property type="match status" value="1"/>
</dbReference>
<dbReference type="SUPFAM" id="SSF53335">
    <property type="entry name" value="S-adenosyl-L-methionine-dependent methyltransferases"/>
    <property type="match status" value="1"/>
</dbReference>
<reference key="1">
    <citation type="submission" date="2007-08" db="EMBL/GenBank/DDBJ databases">
        <authorList>
            <consortium name="The Citrobacter koseri Genome Sequencing Project"/>
            <person name="McClelland M."/>
            <person name="Sanderson E.K."/>
            <person name="Porwollik S."/>
            <person name="Spieth J."/>
            <person name="Clifton W.S."/>
            <person name="Latreille P."/>
            <person name="Courtney L."/>
            <person name="Wang C."/>
            <person name="Pepin K."/>
            <person name="Bhonagiri V."/>
            <person name="Nash W."/>
            <person name="Johnson M."/>
            <person name="Thiruvilangam P."/>
            <person name="Wilson R."/>
        </authorList>
    </citation>
    <scope>NUCLEOTIDE SEQUENCE [LARGE SCALE GENOMIC DNA]</scope>
    <source>
        <strain>ATCC BAA-895 / CDC 4225-83 / SGSC4696</strain>
    </source>
</reference>
<gene>
    <name evidence="1" type="primary">rsmC</name>
    <name type="ordered locus">CKO_03420</name>
</gene>
<protein>
    <recommendedName>
        <fullName evidence="1">Ribosomal RNA small subunit methyltransferase C</fullName>
        <ecNumber evidence="1">2.1.1.172</ecNumber>
    </recommendedName>
    <alternativeName>
        <fullName evidence="1">16S rRNA m2G1207 methyltransferase</fullName>
    </alternativeName>
    <alternativeName>
        <fullName evidence="1">rRNA (guanine-N(2)-)-methyltransferase RsmC</fullName>
    </alternativeName>
</protein>
<proteinExistence type="inferred from homology"/>
<organism>
    <name type="scientific">Citrobacter koseri (strain ATCC BAA-895 / CDC 4225-83 / SGSC4696)</name>
    <dbReference type="NCBI Taxonomy" id="290338"/>
    <lineage>
        <taxon>Bacteria</taxon>
        <taxon>Pseudomonadati</taxon>
        <taxon>Pseudomonadota</taxon>
        <taxon>Gammaproteobacteria</taxon>
        <taxon>Enterobacterales</taxon>
        <taxon>Enterobacteriaceae</taxon>
        <taxon>Citrobacter</taxon>
    </lineage>
</organism>
<feature type="chain" id="PRO_0000369692" description="Ribosomal RNA small subunit methyltransferase C">
    <location>
        <begin position="1"/>
        <end position="342"/>
    </location>
</feature>